<dbReference type="EC" id="2.7.1.11" evidence="1"/>
<dbReference type="EMBL" id="CP001113">
    <property type="protein sequence ID" value="ACF61522.1"/>
    <property type="molecule type" value="Genomic_DNA"/>
</dbReference>
<dbReference type="RefSeq" id="WP_000591793.1">
    <property type="nucleotide sequence ID" value="NZ_CCMR01000001.1"/>
</dbReference>
<dbReference type="SMR" id="B4T049"/>
<dbReference type="GeneID" id="66758327"/>
<dbReference type="KEGG" id="see:SNSL254_A4391"/>
<dbReference type="HOGENOM" id="CLU_020655_0_1_6"/>
<dbReference type="UniPathway" id="UPA00109">
    <property type="reaction ID" value="UER00182"/>
</dbReference>
<dbReference type="Proteomes" id="UP000008824">
    <property type="component" value="Chromosome"/>
</dbReference>
<dbReference type="GO" id="GO:0005945">
    <property type="term" value="C:6-phosphofructokinase complex"/>
    <property type="evidence" value="ECO:0007669"/>
    <property type="project" value="TreeGrafter"/>
</dbReference>
<dbReference type="GO" id="GO:0003872">
    <property type="term" value="F:6-phosphofructokinase activity"/>
    <property type="evidence" value="ECO:0007669"/>
    <property type="project" value="UniProtKB-UniRule"/>
</dbReference>
<dbReference type="GO" id="GO:0016208">
    <property type="term" value="F:AMP binding"/>
    <property type="evidence" value="ECO:0007669"/>
    <property type="project" value="TreeGrafter"/>
</dbReference>
<dbReference type="GO" id="GO:0005524">
    <property type="term" value="F:ATP binding"/>
    <property type="evidence" value="ECO:0007669"/>
    <property type="project" value="UniProtKB-KW"/>
</dbReference>
<dbReference type="GO" id="GO:0070095">
    <property type="term" value="F:fructose-6-phosphate binding"/>
    <property type="evidence" value="ECO:0007669"/>
    <property type="project" value="TreeGrafter"/>
</dbReference>
<dbReference type="GO" id="GO:0042802">
    <property type="term" value="F:identical protein binding"/>
    <property type="evidence" value="ECO:0007669"/>
    <property type="project" value="TreeGrafter"/>
</dbReference>
<dbReference type="GO" id="GO:0046872">
    <property type="term" value="F:metal ion binding"/>
    <property type="evidence" value="ECO:0007669"/>
    <property type="project" value="UniProtKB-KW"/>
</dbReference>
<dbReference type="GO" id="GO:0048029">
    <property type="term" value="F:monosaccharide binding"/>
    <property type="evidence" value="ECO:0007669"/>
    <property type="project" value="TreeGrafter"/>
</dbReference>
<dbReference type="GO" id="GO:0061621">
    <property type="term" value="P:canonical glycolysis"/>
    <property type="evidence" value="ECO:0007669"/>
    <property type="project" value="TreeGrafter"/>
</dbReference>
<dbReference type="GO" id="GO:0030388">
    <property type="term" value="P:fructose 1,6-bisphosphate metabolic process"/>
    <property type="evidence" value="ECO:0007669"/>
    <property type="project" value="TreeGrafter"/>
</dbReference>
<dbReference type="GO" id="GO:0006002">
    <property type="term" value="P:fructose 6-phosphate metabolic process"/>
    <property type="evidence" value="ECO:0007669"/>
    <property type="project" value="InterPro"/>
</dbReference>
<dbReference type="CDD" id="cd00763">
    <property type="entry name" value="Bacterial_PFK"/>
    <property type="match status" value="1"/>
</dbReference>
<dbReference type="FunFam" id="3.40.50.450:FF:000001">
    <property type="entry name" value="ATP-dependent 6-phosphofructokinase"/>
    <property type="match status" value="1"/>
</dbReference>
<dbReference type="FunFam" id="3.40.50.460:FF:000002">
    <property type="entry name" value="ATP-dependent 6-phosphofructokinase"/>
    <property type="match status" value="1"/>
</dbReference>
<dbReference type="Gene3D" id="3.40.50.450">
    <property type="match status" value="1"/>
</dbReference>
<dbReference type="Gene3D" id="3.40.50.460">
    <property type="entry name" value="Phosphofructokinase domain"/>
    <property type="match status" value="1"/>
</dbReference>
<dbReference type="HAMAP" id="MF_00339">
    <property type="entry name" value="Phosphofructokinase_I_B1"/>
    <property type="match status" value="1"/>
</dbReference>
<dbReference type="InterPro" id="IPR022953">
    <property type="entry name" value="ATP_PFK"/>
</dbReference>
<dbReference type="InterPro" id="IPR012003">
    <property type="entry name" value="ATP_PFK_prok-type"/>
</dbReference>
<dbReference type="InterPro" id="IPR012828">
    <property type="entry name" value="PFKA_ATP_prok"/>
</dbReference>
<dbReference type="InterPro" id="IPR015912">
    <property type="entry name" value="Phosphofructokinase_CS"/>
</dbReference>
<dbReference type="InterPro" id="IPR000023">
    <property type="entry name" value="Phosphofructokinase_dom"/>
</dbReference>
<dbReference type="InterPro" id="IPR035966">
    <property type="entry name" value="PKF_sf"/>
</dbReference>
<dbReference type="NCBIfam" id="TIGR02482">
    <property type="entry name" value="PFKA_ATP"/>
    <property type="match status" value="1"/>
</dbReference>
<dbReference type="NCBIfam" id="NF002872">
    <property type="entry name" value="PRK03202.1"/>
    <property type="match status" value="1"/>
</dbReference>
<dbReference type="PANTHER" id="PTHR13697:SF4">
    <property type="entry name" value="ATP-DEPENDENT 6-PHOSPHOFRUCTOKINASE"/>
    <property type="match status" value="1"/>
</dbReference>
<dbReference type="PANTHER" id="PTHR13697">
    <property type="entry name" value="PHOSPHOFRUCTOKINASE"/>
    <property type="match status" value="1"/>
</dbReference>
<dbReference type="Pfam" id="PF00365">
    <property type="entry name" value="PFK"/>
    <property type="match status" value="1"/>
</dbReference>
<dbReference type="PIRSF" id="PIRSF000532">
    <property type="entry name" value="ATP_PFK_prok"/>
    <property type="match status" value="1"/>
</dbReference>
<dbReference type="PRINTS" id="PR00476">
    <property type="entry name" value="PHFRCTKINASE"/>
</dbReference>
<dbReference type="SUPFAM" id="SSF53784">
    <property type="entry name" value="Phosphofructokinase"/>
    <property type="match status" value="1"/>
</dbReference>
<dbReference type="PROSITE" id="PS00433">
    <property type="entry name" value="PHOSPHOFRUCTOKINASE"/>
    <property type="match status" value="1"/>
</dbReference>
<keyword id="KW-0021">Allosteric enzyme</keyword>
<keyword id="KW-0067">ATP-binding</keyword>
<keyword id="KW-0963">Cytoplasm</keyword>
<keyword id="KW-0324">Glycolysis</keyword>
<keyword id="KW-0418">Kinase</keyword>
<keyword id="KW-0460">Magnesium</keyword>
<keyword id="KW-0479">Metal-binding</keyword>
<keyword id="KW-0547">Nucleotide-binding</keyword>
<keyword id="KW-0808">Transferase</keyword>
<evidence type="ECO:0000255" key="1">
    <source>
        <dbReference type="HAMAP-Rule" id="MF_00339"/>
    </source>
</evidence>
<feature type="chain" id="PRO_1000120055" description="ATP-dependent 6-phosphofructokinase">
    <location>
        <begin position="1"/>
        <end position="320"/>
    </location>
</feature>
<feature type="active site" description="Proton acceptor" evidence="1">
    <location>
        <position position="128"/>
    </location>
</feature>
<feature type="binding site" evidence="1">
    <location>
        <position position="12"/>
    </location>
    <ligand>
        <name>ATP</name>
        <dbReference type="ChEBI" id="CHEBI:30616"/>
    </ligand>
</feature>
<feature type="binding site" evidence="1">
    <location>
        <begin position="22"/>
        <end position="26"/>
    </location>
    <ligand>
        <name>ADP</name>
        <dbReference type="ChEBI" id="CHEBI:456216"/>
        <note>allosteric activator; ligand shared between dimeric partners</note>
    </ligand>
</feature>
<feature type="binding site" evidence="1">
    <location>
        <begin position="55"/>
        <end position="60"/>
    </location>
    <ligand>
        <name>ADP</name>
        <dbReference type="ChEBI" id="CHEBI:456216"/>
        <note>allosteric activator; ligand shared between dimeric partners</note>
    </ligand>
</feature>
<feature type="binding site" evidence="1">
    <location>
        <begin position="73"/>
        <end position="74"/>
    </location>
    <ligand>
        <name>ATP</name>
        <dbReference type="ChEBI" id="CHEBI:30616"/>
    </ligand>
</feature>
<feature type="binding site" evidence="1">
    <location>
        <begin position="103"/>
        <end position="106"/>
    </location>
    <ligand>
        <name>ATP</name>
        <dbReference type="ChEBI" id="CHEBI:30616"/>
    </ligand>
</feature>
<feature type="binding site" evidence="1">
    <location>
        <position position="104"/>
    </location>
    <ligand>
        <name>Mg(2+)</name>
        <dbReference type="ChEBI" id="CHEBI:18420"/>
        <note>catalytic</note>
    </ligand>
</feature>
<feature type="binding site" description="in other chain" evidence="1">
    <location>
        <begin position="126"/>
        <end position="128"/>
    </location>
    <ligand>
        <name>substrate</name>
        <note>ligand shared between dimeric partners</note>
    </ligand>
</feature>
<feature type="binding site" description="in other chain" evidence="1">
    <location>
        <position position="155"/>
    </location>
    <ligand>
        <name>ADP</name>
        <dbReference type="ChEBI" id="CHEBI:456216"/>
        <note>allosteric activator; ligand shared between dimeric partners</note>
    </ligand>
</feature>
<feature type="binding site" evidence="1">
    <location>
        <position position="163"/>
    </location>
    <ligand>
        <name>substrate</name>
        <note>ligand shared between dimeric partners</note>
    </ligand>
</feature>
<feature type="binding site" description="in other chain" evidence="1">
    <location>
        <begin position="170"/>
        <end position="172"/>
    </location>
    <ligand>
        <name>substrate</name>
        <note>ligand shared between dimeric partners</note>
    </ligand>
</feature>
<feature type="binding site" description="in other chain" evidence="1">
    <location>
        <begin position="186"/>
        <end position="188"/>
    </location>
    <ligand>
        <name>ADP</name>
        <dbReference type="ChEBI" id="CHEBI:456216"/>
        <note>allosteric activator; ligand shared between dimeric partners</note>
    </ligand>
</feature>
<feature type="binding site" description="in other chain" evidence="1">
    <location>
        <position position="212"/>
    </location>
    <ligand>
        <name>ADP</name>
        <dbReference type="ChEBI" id="CHEBI:456216"/>
        <note>allosteric activator; ligand shared between dimeric partners</note>
    </ligand>
</feature>
<feature type="binding site" description="in other chain" evidence="1">
    <location>
        <begin position="214"/>
        <end position="216"/>
    </location>
    <ligand>
        <name>ADP</name>
        <dbReference type="ChEBI" id="CHEBI:456216"/>
        <note>allosteric activator; ligand shared between dimeric partners</note>
    </ligand>
</feature>
<feature type="binding site" description="in other chain" evidence="1">
    <location>
        <position position="223"/>
    </location>
    <ligand>
        <name>substrate</name>
        <note>ligand shared between dimeric partners</note>
    </ligand>
</feature>
<feature type="binding site" evidence="1">
    <location>
        <position position="244"/>
    </location>
    <ligand>
        <name>substrate</name>
        <note>ligand shared between dimeric partners</note>
    </ligand>
</feature>
<feature type="binding site" description="in other chain" evidence="1">
    <location>
        <begin position="250"/>
        <end position="253"/>
    </location>
    <ligand>
        <name>substrate</name>
        <note>ligand shared between dimeric partners</note>
    </ligand>
</feature>
<organism>
    <name type="scientific">Salmonella newport (strain SL254)</name>
    <dbReference type="NCBI Taxonomy" id="423368"/>
    <lineage>
        <taxon>Bacteria</taxon>
        <taxon>Pseudomonadati</taxon>
        <taxon>Pseudomonadota</taxon>
        <taxon>Gammaproteobacteria</taxon>
        <taxon>Enterobacterales</taxon>
        <taxon>Enterobacteriaceae</taxon>
        <taxon>Salmonella</taxon>
    </lineage>
</organism>
<proteinExistence type="inferred from homology"/>
<protein>
    <recommendedName>
        <fullName evidence="1">ATP-dependent 6-phosphofructokinase</fullName>
        <shortName evidence="1">ATP-PFK</shortName>
        <shortName evidence="1">Phosphofructokinase</shortName>
        <ecNumber evidence="1">2.7.1.11</ecNumber>
    </recommendedName>
    <alternativeName>
        <fullName evidence="1">Phosphohexokinase</fullName>
    </alternativeName>
</protein>
<sequence>MIKKIGVLTSGGDAPGMNAAIRGVVRAALTEGLEVMGIYDGYLGLYEDRMVQLDRYSVSDMINRGGTFLGSARFPEFRDENIRAVAIENLKKRGIDALVVIGGDGSYMGAKRLTEMGFPCIGLPGTIDNDIKGTDYTIGYFTALGTVVEAIDRLRDTSSSHQRISIVEVMGRYCGDLTLAAAIAGGCEFIVVPEVEFNREDLVAEIKAGIAKGKKHAIVAITEHMCDVDELAHFIEKETGRETRATVLGHIQRGGSPVPYDRILASRMGAYAIDLLLEGHGGRCVGIQNEQLVHHDIIDAIENMKRPFKSDWMECAKKLY</sequence>
<gene>
    <name evidence="1" type="primary">pfkA</name>
    <name type="ordered locus">SNSL254_A4391</name>
</gene>
<name>PFKA_SALNS</name>
<accession>B4T049</accession>
<reference key="1">
    <citation type="journal article" date="2011" name="J. Bacteriol.">
        <title>Comparative genomics of 28 Salmonella enterica isolates: evidence for CRISPR-mediated adaptive sublineage evolution.</title>
        <authorList>
            <person name="Fricke W.F."/>
            <person name="Mammel M.K."/>
            <person name="McDermott P.F."/>
            <person name="Tartera C."/>
            <person name="White D.G."/>
            <person name="Leclerc J.E."/>
            <person name="Ravel J."/>
            <person name="Cebula T.A."/>
        </authorList>
    </citation>
    <scope>NUCLEOTIDE SEQUENCE [LARGE SCALE GENOMIC DNA]</scope>
    <source>
        <strain>SL254</strain>
    </source>
</reference>
<comment type="function">
    <text evidence="1">Catalyzes the phosphorylation of D-fructose 6-phosphate to fructose 1,6-bisphosphate by ATP, the first committing step of glycolysis.</text>
</comment>
<comment type="catalytic activity">
    <reaction evidence="1">
        <text>beta-D-fructose 6-phosphate + ATP = beta-D-fructose 1,6-bisphosphate + ADP + H(+)</text>
        <dbReference type="Rhea" id="RHEA:16109"/>
        <dbReference type="ChEBI" id="CHEBI:15378"/>
        <dbReference type="ChEBI" id="CHEBI:30616"/>
        <dbReference type="ChEBI" id="CHEBI:32966"/>
        <dbReference type="ChEBI" id="CHEBI:57634"/>
        <dbReference type="ChEBI" id="CHEBI:456216"/>
        <dbReference type="EC" id="2.7.1.11"/>
    </reaction>
</comment>
<comment type="cofactor">
    <cofactor evidence="1">
        <name>Mg(2+)</name>
        <dbReference type="ChEBI" id="CHEBI:18420"/>
    </cofactor>
</comment>
<comment type="activity regulation">
    <text evidence="1">Allosterically activated by ADP and other diphosphonucleosides, and allosterically inhibited by phosphoenolpyruvate.</text>
</comment>
<comment type="pathway">
    <text evidence="1">Carbohydrate degradation; glycolysis; D-glyceraldehyde 3-phosphate and glycerone phosphate from D-glucose: step 3/4.</text>
</comment>
<comment type="subunit">
    <text evidence="1">Homotetramer.</text>
</comment>
<comment type="subcellular location">
    <subcellularLocation>
        <location evidence="1">Cytoplasm</location>
    </subcellularLocation>
</comment>
<comment type="similarity">
    <text evidence="1">Belongs to the phosphofructokinase type A (PFKA) family. ATP-dependent PFK group I subfamily. Prokaryotic clade 'B1' sub-subfamily.</text>
</comment>